<name>T106C_RAT</name>
<protein>
    <recommendedName>
        <fullName>Transmembrane protein 106C</fullName>
    </recommendedName>
</protein>
<keyword id="KW-0256">Endoplasmic reticulum</keyword>
<keyword id="KW-0325">Glycoprotein</keyword>
<keyword id="KW-0449">Lipoprotein</keyword>
<keyword id="KW-0472">Membrane</keyword>
<keyword id="KW-0519">Myristate</keyword>
<keyword id="KW-1185">Reference proteome</keyword>
<keyword id="KW-0812">Transmembrane</keyword>
<keyword id="KW-1133">Transmembrane helix</keyword>
<comment type="subunit">
    <text evidence="2">Interacts with TMEM106B.</text>
</comment>
<comment type="subcellular location">
    <subcellularLocation>
        <location evidence="1">Endoplasmic reticulum membrane</location>
        <topology evidence="1">Multi-pass membrane protein</topology>
    </subcellularLocation>
    <subcellularLocation>
        <location evidence="2">Membrane</location>
        <topology evidence="2">Lipid-anchor</topology>
    </subcellularLocation>
</comment>
<comment type="similarity">
    <text evidence="4">Belongs to the TMEM106 family.</text>
</comment>
<sequence>MGSQHSSALTFCQRKKDDNPEDLLAERDQEEAIAQFPYVEFTGRNSITCHTCQGAGYIPEEQVNKLVALIPHSDQRLRPQRTKQYVLLSVLLCLLASGLVFFFLFPHSVLVDDNGIRVSNVTFNKQDSLVVLDVTATLKIRNSNFYPVAVTNLFSQVQYMKAVVGSYTAANVSLIPPRSEHLVNFTVKAEVGGPSSYVYFYCTLPAILVHNIVIFMRTSVQISYIGHTSQSTLEAQHNVDCGENSTAVQSLLLVPWGPHL</sequence>
<accession>Q5RJK0</accession>
<organism>
    <name type="scientific">Rattus norvegicus</name>
    <name type="common">Rat</name>
    <dbReference type="NCBI Taxonomy" id="10116"/>
    <lineage>
        <taxon>Eukaryota</taxon>
        <taxon>Metazoa</taxon>
        <taxon>Chordata</taxon>
        <taxon>Craniata</taxon>
        <taxon>Vertebrata</taxon>
        <taxon>Euteleostomi</taxon>
        <taxon>Mammalia</taxon>
        <taxon>Eutheria</taxon>
        <taxon>Euarchontoglires</taxon>
        <taxon>Glires</taxon>
        <taxon>Rodentia</taxon>
        <taxon>Myomorpha</taxon>
        <taxon>Muroidea</taxon>
        <taxon>Muridae</taxon>
        <taxon>Murinae</taxon>
        <taxon>Rattus</taxon>
    </lineage>
</organism>
<dbReference type="EMBL" id="BC086606">
    <property type="protein sequence ID" value="AAH86606.1"/>
    <property type="molecule type" value="mRNA"/>
</dbReference>
<dbReference type="RefSeq" id="NP_001008359.1">
    <property type="nucleotide sequence ID" value="NM_001008358.1"/>
</dbReference>
<dbReference type="RefSeq" id="XP_006242388.1">
    <property type="nucleotide sequence ID" value="XM_006242326.5"/>
</dbReference>
<dbReference type="RefSeq" id="XP_017450377.1">
    <property type="nucleotide sequence ID" value="XM_017594888.3"/>
</dbReference>
<dbReference type="FunCoup" id="Q5RJK0">
    <property type="interactions" value="371"/>
</dbReference>
<dbReference type="STRING" id="10116.ENSRNOP00000071424"/>
<dbReference type="GlyCosmos" id="Q5RJK0">
    <property type="glycosylation" value="1 site, No reported glycans"/>
</dbReference>
<dbReference type="GlyGen" id="Q5RJK0">
    <property type="glycosylation" value="1 site"/>
</dbReference>
<dbReference type="PhosphoSitePlus" id="Q5RJK0"/>
<dbReference type="PaxDb" id="10116-ENSRNOP00000011638"/>
<dbReference type="Ensembl" id="ENSRNOT00000090079.2">
    <property type="protein sequence ID" value="ENSRNOP00000071424.1"/>
    <property type="gene ID" value="ENSRNOG00000053269.2"/>
</dbReference>
<dbReference type="GeneID" id="315286"/>
<dbReference type="KEGG" id="rno:315286"/>
<dbReference type="UCSC" id="RGD:1311532">
    <property type="organism name" value="rat"/>
</dbReference>
<dbReference type="AGR" id="RGD:1311532"/>
<dbReference type="CTD" id="79022"/>
<dbReference type="RGD" id="1311532">
    <property type="gene designation" value="Tmem106c"/>
</dbReference>
<dbReference type="eggNOG" id="ENOG502QQ43">
    <property type="taxonomic scope" value="Eukaryota"/>
</dbReference>
<dbReference type="GeneTree" id="ENSGT00940000161281"/>
<dbReference type="HOGENOM" id="CLU_089337_0_0_1"/>
<dbReference type="InParanoid" id="Q5RJK0"/>
<dbReference type="OrthoDB" id="36985at9989"/>
<dbReference type="PhylomeDB" id="Q5RJK0"/>
<dbReference type="TreeFam" id="TF328907"/>
<dbReference type="PRO" id="PR:Q5RJK0"/>
<dbReference type="Proteomes" id="UP000002494">
    <property type="component" value="Chromosome 7"/>
</dbReference>
<dbReference type="Bgee" id="ENSRNOG00000053269">
    <property type="expression patterns" value="Expressed in heart and 20 other cell types or tissues"/>
</dbReference>
<dbReference type="GO" id="GO:0005789">
    <property type="term" value="C:endoplasmic reticulum membrane"/>
    <property type="evidence" value="ECO:0007669"/>
    <property type="project" value="UniProtKB-SubCell"/>
</dbReference>
<dbReference type="InterPro" id="IPR009790">
    <property type="entry name" value="TMEM106"/>
</dbReference>
<dbReference type="InterPro" id="IPR048509">
    <property type="entry name" value="TMEM106_C"/>
</dbReference>
<dbReference type="InterPro" id="IPR048511">
    <property type="entry name" value="TMEM106_N"/>
</dbReference>
<dbReference type="PANTHER" id="PTHR28556">
    <property type="entry name" value="TRANSMEMBRANE PROTEIN 106B"/>
    <property type="match status" value="1"/>
</dbReference>
<dbReference type="PANTHER" id="PTHR28556:SF5">
    <property type="entry name" value="TRANSMEMBRANE PROTEIN 106C"/>
    <property type="match status" value="1"/>
</dbReference>
<dbReference type="Pfam" id="PF07092">
    <property type="entry name" value="TMEM106"/>
    <property type="match status" value="1"/>
</dbReference>
<dbReference type="Pfam" id="PF21002">
    <property type="entry name" value="TMEM106_N"/>
    <property type="match status" value="1"/>
</dbReference>
<proteinExistence type="evidence at transcript level"/>
<evidence type="ECO:0000250" key="1"/>
<evidence type="ECO:0000250" key="2">
    <source>
        <dbReference type="UniProtKB" id="Q9BVX2"/>
    </source>
</evidence>
<evidence type="ECO:0000255" key="3"/>
<evidence type="ECO:0000305" key="4"/>
<feature type="initiator methionine" description="Removed" evidence="2">
    <location>
        <position position="1"/>
    </location>
</feature>
<feature type="chain" id="PRO_0000243902" description="Transmembrane protein 106C">
    <location>
        <begin position="2"/>
        <end position="260"/>
    </location>
</feature>
<feature type="transmembrane region" description="Helical" evidence="3">
    <location>
        <begin position="85"/>
        <end position="105"/>
    </location>
</feature>
<feature type="transmembrane region" description="Helical" evidence="3">
    <location>
        <begin position="196"/>
        <end position="216"/>
    </location>
</feature>
<feature type="lipid moiety-binding region" description="N-myristoyl glycine" evidence="2">
    <location>
        <position position="2"/>
    </location>
</feature>
<feature type="glycosylation site" description="N-linked (GlcNAc...) asparagine" evidence="3">
    <location>
        <position position="171"/>
    </location>
</feature>
<reference key="1">
    <citation type="journal article" date="2004" name="Genome Res.">
        <title>The status, quality, and expansion of the NIH full-length cDNA project: the Mammalian Gene Collection (MGC).</title>
        <authorList>
            <consortium name="The MGC Project Team"/>
        </authorList>
    </citation>
    <scope>NUCLEOTIDE SEQUENCE [LARGE SCALE MRNA]</scope>
    <source>
        <tissue>Brain</tissue>
    </source>
</reference>
<gene>
    <name type="primary">Tmem106c</name>
</gene>